<evidence type="ECO:0000269" key="1">
    <source>
    </source>
</evidence>
<evidence type="ECO:0000269" key="2">
    <source>
    </source>
</evidence>
<evidence type="ECO:0000269" key="3">
    <source>
    </source>
</evidence>
<evidence type="ECO:0000269" key="4">
    <source>
    </source>
</evidence>
<evidence type="ECO:0000305" key="5"/>
<evidence type="ECO:0007829" key="6">
    <source>
        <dbReference type="PDB" id="3DWG"/>
    </source>
</evidence>
<sequence length="93" mass="9557">MNVTVSIPTILRPHTGGQKSVSASGDTLGAVISDLEANYSGISERLMDPSSPGKLHRFVNIYVNDEDVRFSGGLATAIADGDSVTILPAVAGG</sequence>
<feature type="chain" id="PRO_0000159082" description="Sulfur carrier protein CysO">
    <location>
        <begin position="1"/>
        <end position="93"/>
    </location>
</feature>
<feature type="modified residue" description="1-thioglycine; alternate" evidence="2">
    <location>
        <position position="93"/>
    </location>
</feature>
<feature type="modified residue" description="CysO-cysteine adduct; alternate" evidence="3">
    <location>
        <position position="93"/>
    </location>
</feature>
<feature type="strand" evidence="6">
    <location>
        <begin position="3"/>
        <end position="6"/>
    </location>
</feature>
<feature type="helix" evidence="6">
    <location>
        <begin position="9"/>
        <end position="14"/>
    </location>
</feature>
<feature type="turn" evidence="6">
    <location>
        <begin position="15"/>
        <end position="17"/>
    </location>
</feature>
<feature type="strand" evidence="6">
    <location>
        <begin position="19"/>
        <end position="23"/>
    </location>
</feature>
<feature type="helix" evidence="6">
    <location>
        <begin position="28"/>
        <end position="38"/>
    </location>
</feature>
<feature type="helix" evidence="6">
    <location>
        <begin position="42"/>
        <end position="46"/>
    </location>
</feature>
<feature type="strand" evidence="6">
    <location>
        <begin position="49"/>
        <end position="51"/>
    </location>
</feature>
<feature type="strand" evidence="6">
    <location>
        <begin position="59"/>
        <end position="63"/>
    </location>
</feature>
<feature type="helix" evidence="6">
    <location>
        <begin position="68"/>
        <end position="70"/>
    </location>
</feature>
<feature type="helix" evidence="6">
    <location>
        <begin position="73"/>
        <end position="75"/>
    </location>
</feature>
<feature type="strand" evidence="6">
    <location>
        <begin position="83"/>
        <end position="88"/>
    </location>
</feature>
<name>CYSO_MYCTU</name>
<proteinExistence type="evidence at protein level"/>
<keyword id="KW-0002">3D-structure</keyword>
<keyword id="KW-0028">Amino-acid biosynthesis</keyword>
<keyword id="KW-0198">Cysteine biosynthesis</keyword>
<keyword id="KW-1185">Reference proteome</keyword>
<protein>
    <recommendedName>
        <fullName>Sulfur carrier protein CysO</fullName>
    </recommendedName>
    <alternativeName>
        <fullName>9.5 kDa culture filtrate antigen cfp10A</fullName>
    </alternativeName>
</protein>
<accession>P9WP33</accession>
<accession>L0T9C0</accession>
<accession>P0A646</accession>
<accession>Q10646</accession>
<dbReference type="EMBL" id="AJ007738">
    <property type="protein sequence ID" value="CAA07637.1"/>
    <property type="molecule type" value="Genomic_DNA"/>
</dbReference>
<dbReference type="EMBL" id="AL123456">
    <property type="protein sequence ID" value="CCP44093.1"/>
    <property type="molecule type" value="Genomic_DNA"/>
</dbReference>
<dbReference type="PIR" id="C70771">
    <property type="entry name" value="C70771"/>
</dbReference>
<dbReference type="RefSeq" id="NP_215851.1">
    <property type="nucleotide sequence ID" value="NC_000962.3"/>
</dbReference>
<dbReference type="RefSeq" id="WP_003406910.1">
    <property type="nucleotide sequence ID" value="NZ_NVQJ01000031.1"/>
</dbReference>
<dbReference type="PDB" id="3DWG">
    <property type="method" value="X-ray"/>
    <property type="resolution" value="1.53 A"/>
    <property type="chains" value="C=1-93"/>
</dbReference>
<dbReference type="PDB" id="3DWM">
    <property type="method" value="X-ray"/>
    <property type="resolution" value="2.69 A"/>
    <property type="chains" value="A/B=1-93"/>
</dbReference>
<dbReference type="PDBsum" id="3DWG"/>
<dbReference type="PDBsum" id="3DWM"/>
<dbReference type="SMR" id="P9WP33"/>
<dbReference type="STRING" id="83332.Rv1335"/>
<dbReference type="PaxDb" id="83332-Rv1335"/>
<dbReference type="DNASU" id="886879"/>
<dbReference type="GeneID" id="45425313"/>
<dbReference type="GeneID" id="886879"/>
<dbReference type="KEGG" id="mtu:Rv1335"/>
<dbReference type="KEGG" id="mtv:RVBD_1335"/>
<dbReference type="TubercuList" id="Rv1335"/>
<dbReference type="eggNOG" id="COG1977">
    <property type="taxonomic scope" value="Bacteria"/>
</dbReference>
<dbReference type="InParanoid" id="P9WP33"/>
<dbReference type="OrthoDB" id="9156098at2"/>
<dbReference type="PhylomeDB" id="P9WP33"/>
<dbReference type="BioCyc" id="MetaCyc:G185E-5514-MONOMER"/>
<dbReference type="Reactome" id="R-MTU-936654">
    <property type="pathway name" value="Cysteine synthesis from O-phosphoserine"/>
</dbReference>
<dbReference type="UniPathway" id="UPA00136"/>
<dbReference type="EvolutionaryTrace" id="P9WP33"/>
<dbReference type="Proteomes" id="UP000001584">
    <property type="component" value="Chromosome"/>
</dbReference>
<dbReference type="GO" id="GO:0005829">
    <property type="term" value="C:cytosol"/>
    <property type="evidence" value="ECO:0000304"/>
    <property type="project" value="Reactome"/>
</dbReference>
<dbReference type="GO" id="GO:0032991">
    <property type="term" value="C:protein-containing complex"/>
    <property type="evidence" value="ECO:0000314"/>
    <property type="project" value="MTBBASE"/>
</dbReference>
<dbReference type="GO" id="GO:0019344">
    <property type="term" value="P:cysteine biosynthetic process"/>
    <property type="evidence" value="ECO:0000314"/>
    <property type="project" value="MTBBASE"/>
</dbReference>
<dbReference type="CDD" id="cd17074">
    <property type="entry name" value="Ubl_CysO_like"/>
    <property type="match status" value="1"/>
</dbReference>
<dbReference type="FunFam" id="3.10.20.30:FF:000038">
    <property type="entry name" value="Molybdopterin synthase sulfur carrier subunit"/>
    <property type="match status" value="1"/>
</dbReference>
<dbReference type="Gene3D" id="3.10.20.30">
    <property type="match status" value="1"/>
</dbReference>
<dbReference type="InterPro" id="IPR012675">
    <property type="entry name" value="Beta-grasp_dom_sf"/>
</dbReference>
<dbReference type="InterPro" id="IPR016155">
    <property type="entry name" value="Mopterin_synth/thiamin_S_b"/>
</dbReference>
<dbReference type="InterPro" id="IPR052045">
    <property type="entry name" value="Sulfur_Carrier/Prot_Modifier"/>
</dbReference>
<dbReference type="InterPro" id="IPR003749">
    <property type="entry name" value="ThiS/MoaD-like"/>
</dbReference>
<dbReference type="PANTHER" id="PTHR38031:SF1">
    <property type="entry name" value="SULFUR CARRIER PROTEIN CYSO"/>
    <property type="match status" value="1"/>
</dbReference>
<dbReference type="PANTHER" id="PTHR38031">
    <property type="entry name" value="SULFUR CARRIER PROTEIN SLR0821-RELATED"/>
    <property type="match status" value="1"/>
</dbReference>
<dbReference type="Pfam" id="PF02597">
    <property type="entry name" value="ThiS"/>
    <property type="match status" value="1"/>
</dbReference>
<dbReference type="SUPFAM" id="SSF54285">
    <property type="entry name" value="MoaD/ThiS"/>
    <property type="match status" value="1"/>
</dbReference>
<organism>
    <name type="scientific">Mycobacterium tuberculosis (strain ATCC 25618 / H37Rv)</name>
    <dbReference type="NCBI Taxonomy" id="83332"/>
    <lineage>
        <taxon>Bacteria</taxon>
        <taxon>Bacillati</taxon>
        <taxon>Actinomycetota</taxon>
        <taxon>Actinomycetes</taxon>
        <taxon>Mycobacteriales</taxon>
        <taxon>Mycobacteriaceae</taxon>
        <taxon>Mycobacterium</taxon>
        <taxon>Mycobacterium tuberculosis complex</taxon>
    </lineage>
</organism>
<gene>
    <name type="primary">cysO</name>
    <name type="synonym">cfp10A</name>
    <name type="ordered locus">Rv1335</name>
    <name type="ORF">MTCY130.20</name>
</gene>
<comment type="function">
    <text evidence="2 3 4">In its thiocarboxylated form (CysO-COSH), is the sulfur donor in the CysM-dependent cysteine biosynthetic pathway. May be of particular importance for cysteine biosynthesis in the persistent phase of M.tuberculosis.</text>
</comment>
<comment type="pathway">
    <text>Amino-acid biosynthesis; L-cysteine biosynthesis.</text>
</comment>
<comment type="induction">
    <text evidence="1">Up-regulated under oxidative stress conditions.</text>
</comment>
<comment type="PTM">
    <text evidence="2">Thiocarboxylated by MoeZ.</text>
</comment>
<comment type="PTM">
    <text evidence="3">A covalent CysO-cysteine adduct is formed by the action of CysM. The structure of the adduct seems to be first a S-(glycyl)-cysteinate which leads to a N-(glycyl)-cysteinate after a S-&gt;N acyl shift.</text>
</comment>
<comment type="mass spectrometry" mass="9557.5" method="Unknown" evidence="3">
    <text>Native form.</text>
</comment>
<comment type="mass spectrometry" mass="9573.8" method="Unknown" evidence="3">
    <text>Thiocarboxylated form.</text>
</comment>
<comment type="mass spectrometry" mass="9659.6" method="Unknown" evidence="3">
    <text>CysO-cysteine adduct.</text>
</comment>
<comment type="similarity">
    <text evidence="5">Belongs to the sulfur carrier protein CysO family.</text>
</comment>
<reference key="1">
    <citation type="submission" date="1998-08" db="EMBL/GenBank/DDBJ databases">
        <authorList>
            <person name="Oettinger T."/>
        </authorList>
    </citation>
    <scope>NUCLEOTIDE SEQUENCE [GENOMIC DNA]</scope>
    <source>
        <strain>ATCC 25618 / H37Rv</strain>
    </source>
</reference>
<reference key="2">
    <citation type="journal article" date="1998" name="Nature">
        <title>Deciphering the biology of Mycobacterium tuberculosis from the complete genome sequence.</title>
        <authorList>
            <person name="Cole S.T."/>
            <person name="Brosch R."/>
            <person name="Parkhill J."/>
            <person name="Garnier T."/>
            <person name="Churcher C.M."/>
            <person name="Harris D.E."/>
            <person name="Gordon S.V."/>
            <person name="Eiglmeier K."/>
            <person name="Gas S."/>
            <person name="Barry C.E. III"/>
            <person name="Tekaia F."/>
            <person name="Badcock K."/>
            <person name="Basham D."/>
            <person name="Brown D."/>
            <person name="Chillingworth T."/>
            <person name="Connor R."/>
            <person name="Davies R.M."/>
            <person name="Devlin K."/>
            <person name="Feltwell T."/>
            <person name="Gentles S."/>
            <person name="Hamlin N."/>
            <person name="Holroyd S."/>
            <person name="Hornsby T."/>
            <person name="Jagels K."/>
            <person name="Krogh A."/>
            <person name="McLean J."/>
            <person name="Moule S."/>
            <person name="Murphy L.D."/>
            <person name="Oliver S."/>
            <person name="Osborne J."/>
            <person name="Quail M.A."/>
            <person name="Rajandream M.A."/>
            <person name="Rogers J."/>
            <person name="Rutter S."/>
            <person name="Seeger K."/>
            <person name="Skelton S."/>
            <person name="Squares S."/>
            <person name="Squares R."/>
            <person name="Sulston J.E."/>
            <person name="Taylor K."/>
            <person name="Whitehead S."/>
            <person name="Barrell B.G."/>
        </authorList>
    </citation>
    <scope>NUCLEOTIDE SEQUENCE [LARGE SCALE GENOMIC DNA]</scope>
    <source>
        <strain>ATCC 25618 / H37Rv</strain>
    </source>
</reference>
<reference key="3">
    <citation type="journal article" date="2001" name="Proteomics">
        <title>Identification of acidic, low molecular mass proteins of Mycobacterium tuberculosis strain H37Rv by matrix-assisted laser desorption/ionization and electrospray ionization mass spectrometry.</title>
        <authorList>
            <person name="Mattow J."/>
            <person name="Jungblut P.R."/>
            <person name="Mueller E.-C."/>
            <person name="Kaufmann S.H.E."/>
        </authorList>
    </citation>
    <scope>IDENTIFICATION BY MASS SPECTROMETRY</scope>
    <source>
        <strain>ATCC 25618 / H37Rv</strain>
    </source>
</reference>
<reference key="4">
    <citation type="journal article" date="2002" name="Mol. Microbiol.">
        <title>Role of the extracytoplasmic-function sigma factor sigma(H) in Mycobacterium tuberculosis global gene expression.</title>
        <authorList>
            <person name="Manganelli R."/>
            <person name="Voskuil M.I."/>
            <person name="Schoolnik G.K."/>
            <person name="Dubnau E."/>
            <person name="Gomez M."/>
            <person name="Smith I."/>
        </authorList>
    </citation>
    <scope>INDUCTION</scope>
    <source>
        <strain>ATCC 25618 / H37Rv</strain>
    </source>
</reference>
<reference key="5">
    <citation type="journal article" date="2005" name="J. Am. Chem. Soc.">
        <title>Reconstitution of a new cysteine biosynthetic pathway in Mycobacterium tuberculosis.</title>
        <authorList>
            <person name="Burns K.E."/>
            <person name="Baumgart S."/>
            <person name="Dorrestein P.C."/>
            <person name="Zhai H."/>
            <person name="McLafferty F.W."/>
            <person name="Begley T.P."/>
        </authorList>
    </citation>
    <scope>FUNCTION</scope>
    <scope>THIOCARBOXYLATION AT GLY-93 BY MOEZ</scope>
    <source>
        <strain>ATCC 25618 / H37Rv</strain>
    </source>
</reference>
<reference key="6">
    <citation type="journal article" date="2008" name="Biochemistry">
        <title>O-phospho-L-serine and the thiocarboxylated sulfur carrier protein CysO-COSH are substrates for CysM, a cysteine synthase from Mycobacterium tuberculosis.</title>
        <authorList>
            <person name="O'Leary S.E."/>
            <person name="Jurgenson C.T."/>
            <person name="Ealick S.E."/>
            <person name="Begley T.P."/>
        </authorList>
    </citation>
    <scope>FUNCTION</scope>
    <scope>KINETIC STUDIES</scope>
</reference>
<reference key="7">
    <citation type="journal article" date="2008" name="J. Biol. Chem.">
        <title>Cysteine synthase (CysM) of Mycobacterium tuberculosis is an O-phosphoserine sulfhydrylase: evidence for an alternative cysteine biosynthesis pathway in mycobacteria.</title>
        <authorList>
            <person name="Agren D."/>
            <person name="Schnell R."/>
            <person name="Oehlmann W."/>
            <person name="Singh M."/>
            <person name="Schneider G."/>
        </authorList>
    </citation>
    <scope>FUNCTION</scope>
    <scope>MASS SPECTROMETRY</scope>
    <scope>PTM</scope>
    <source>
        <strain>ATCC 25618 / H37Rv</strain>
    </source>
</reference>
<reference key="8">
    <citation type="journal article" date="2011" name="Mol. Cell. Proteomics">
        <title>Proteogenomic analysis of Mycobacterium tuberculosis by high resolution mass spectrometry.</title>
        <authorList>
            <person name="Kelkar D.S."/>
            <person name="Kumar D."/>
            <person name="Kumar P."/>
            <person name="Balakrishnan L."/>
            <person name="Muthusamy B."/>
            <person name="Yadav A.K."/>
            <person name="Shrivastava P."/>
            <person name="Marimuthu A."/>
            <person name="Anand S."/>
            <person name="Sundaram H."/>
            <person name="Kingsbury R."/>
            <person name="Harsha H.C."/>
            <person name="Nair B."/>
            <person name="Prasad T.S."/>
            <person name="Chauhan D.S."/>
            <person name="Katoch K."/>
            <person name="Katoch V.M."/>
            <person name="Kumar P."/>
            <person name="Chaerkady R."/>
            <person name="Ramachandran S."/>
            <person name="Dash D."/>
            <person name="Pandey A."/>
        </authorList>
    </citation>
    <scope>IDENTIFICATION BY MASS SPECTROMETRY [LARGE SCALE ANALYSIS]</scope>
    <source>
        <strain>ATCC 25618 / H37Rv</strain>
    </source>
</reference>
<reference key="9">
    <citation type="journal article" date="2008" name="Biochemistry">
        <title>Crystal structure of a sulfur carrier protein complex found in the cysteine biosynthetic pathway of Mycobacterium tuberculosis.</title>
        <authorList>
            <person name="Jurgenson C.T."/>
            <person name="Burns K.E."/>
            <person name="Begley T.P."/>
            <person name="Ealick S.E."/>
        </authorList>
    </citation>
    <scope>X-RAY CRYSTALLOGRAPHY (1.53 ANGSTROMS) OF NATIVE PROTEIN AND COMPLEX WITH PROTEIN CYSM</scope>
</reference>